<sequence length="373" mass="40386">MVSGGGVAAENGEMVGNGEGRKGAGASVLVTGGAGYIGTHTVLRLLEKGFAVTVVDNFHNSVPEALDRVRLIAGAALSARLDFIAGDLKSKDDMEKVFAAKRYDAVIHFAGLKAVGESVAHPQMYYENNVAGTMNLYSAMTKYGCKKIVFSSSATVYGQPEKTPCVEDSKLSALNPYGTTKLVLENYFRQVQAADPEMRVILLRYFNPIGAHRSGDIGEDPRGIPNNLLPYIQQVAVGRRPELNVYGVDYPTRDGTAIRDYIHVVDLADGHIAALEKLFATPDIGCVAYNLGTGCGTTVLEVVKAFEEASGKKIPIKICPRRPGDCTEVYASTDKAKKELGWSARFGIEDMCRDQWNWAKKNPYGYSANAEQN</sequence>
<protein>
    <recommendedName>
        <fullName>UDP-glucose 4-epimerase 3</fullName>
        <shortName>OsUGE-3</shortName>
        <ecNumber>5.1.3.2</ecNumber>
    </recommendedName>
    <alternativeName>
        <fullName>UDP-galactose 4-epimerase 3</fullName>
    </alternativeName>
</protein>
<keyword id="KW-0119">Carbohydrate metabolism</keyword>
<keyword id="KW-0299">Galactose metabolism</keyword>
<keyword id="KW-0413">Isomerase</keyword>
<keyword id="KW-0520">NAD</keyword>
<keyword id="KW-1185">Reference proteome</keyword>
<comment type="function">
    <text evidence="1">Catalyzes the interconversion between UDP-glucose and UDP-galactose.</text>
</comment>
<comment type="catalytic activity">
    <reaction>
        <text>UDP-alpha-D-glucose = UDP-alpha-D-galactose</text>
        <dbReference type="Rhea" id="RHEA:22168"/>
        <dbReference type="ChEBI" id="CHEBI:58885"/>
        <dbReference type="ChEBI" id="CHEBI:66914"/>
        <dbReference type="EC" id="5.1.3.2"/>
    </reaction>
</comment>
<comment type="cofactor">
    <cofactor evidence="1">
        <name>NAD(+)</name>
        <dbReference type="ChEBI" id="CHEBI:57540"/>
    </cofactor>
</comment>
<comment type="pathway">
    <text>Carbohydrate metabolism; galactose metabolism.</text>
</comment>
<comment type="similarity">
    <text evidence="2">Belongs to the NAD(P)-dependent epimerase/dehydratase family.</text>
</comment>
<comment type="sequence caution" evidence="2">
    <conflict type="erroneous initiation">
        <sequence resource="EMBL-CDS" id="BAC41499"/>
    </conflict>
    <text>Truncated N-terminus.</text>
</comment>
<accession>Q652A8</accession>
<accession>A0A0P0XQ27</accession>
<accession>Q8H0B7</accession>
<dbReference type="EC" id="5.1.3.2"/>
<dbReference type="EMBL" id="AB097460">
    <property type="protein sequence ID" value="BAC41499.1"/>
    <property type="status" value="ALT_INIT"/>
    <property type="molecule type" value="mRNA"/>
</dbReference>
<dbReference type="EMBL" id="AP005681">
    <property type="protein sequence ID" value="BAD46359.1"/>
    <property type="molecule type" value="Genomic_DNA"/>
</dbReference>
<dbReference type="EMBL" id="AP008215">
    <property type="protein sequence ID" value="BAF25641.1"/>
    <property type="molecule type" value="Genomic_DNA"/>
</dbReference>
<dbReference type="EMBL" id="AP014965">
    <property type="protein sequence ID" value="BAT09056.1"/>
    <property type="molecule type" value="Genomic_DNA"/>
</dbReference>
<dbReference type="EMBL" id="CM000146">
    <property type="protein sequence ID" value="EEE70082.1"/>
    <property type="molecule type" value="Genomic_DNA"/>
</dbReference>
<dbReference type="EMBL" id="AK073610">
    <property type="protein sequence ID" value="BAG93548.1"/>
    <property type="molecule type" value="mRNA"/>
</dbReference>
<dbReference type="EMBL" id="AK104977">
    <property type="protein sequence ID" value="BAG97056.1"/>
    <property type="molecule type" value="mRNA"/>
</dbReference>
<dbReference type="RefSeq" id="XP_015610723.1">
    <property type="nucleotide sequence ID" value="XM_015755237.1"/>
</dbReference>
<dbReference type="SMR" id="Q652A8"/>
<dbReference type="FunCoup" id="Q652A8">
    <property type="interactions" value="414"/>
</dbReference>
<dbReference type="STRING" id="39947.Q652A8"/>
<dbReference type="PaxDb" id="39947-Q652A8"/>
<dbReference type="EnsemblPlants" id="Os09t0526700-01">
    <property type="protein sequence ID" value="Os09t0526700-01"/>
    <property type="gene ID" value="Os09g0526700"/>
</dbReference>
<dbReference type="EnsemblPlants" id="Os09t0526700-02">
    <property type="protein sequence ID" value="Os09t0526700-02"/>
    <property type="gene ID" value="Os09g0526700"/>
</dbReference>
<dbReference type="Gramene" id="Os09t0526700-01">
    <property type="protein sequence ID" value="Os09t0526700-01"/>
    <property type="gene ID" value="Os09g0526700"/>
</dbReference>
<dbReference type="Gramene" id="Os09t0526700-02">
    <property type="protein sequence ID" value="Os09t0526700-02"/>
    <property type="gene ID" value="Os09g0526700"/>
</dbReference>
<dbReference type="KEGG" id="dosa:Os09g0526700"/>
<dbReference type="eggNOG" id="KOG1371">
    <property type="taxonomic scope" value="Eukaryota"/>
</dbReference>
<dbReference type="HOGENOM" id="CLU_007383_1_10_1"/>
<dbReference type="InParanoid" id="Q652A8"/>
<dbReference type="OMA" id="CVILRYF"/>
<dbReference type="OrthoDB" id="9402762at2759"/>
<dbReference type="PlantReactome" id="R-OSA-1119452">
    <property type="pathway name" value="Galactose degradation II"/>
</dbReference>
<dbReference type="UniPathway" id="UPA00214"/>
<dbReference type="Proteomes" id="UP000000763">
    <property type="component" value="Chromosome 9"/>
</dbReference>
<dbReference type="Proteomes" id="UP000007752">
    <property type="component" value="Chromosome 9"/>
</dbReference>
<dbReference type="Proteomes" id="UP000059680">
    <property type="component" value="Chromosome 9"/>
</dbReference>
<dbReference type="GO" id="GO:0005829">
    <property type="term" value="C:cytosol"/>
    <property type="evidence" value="ECO:0000318"/>
    <property type="project" value="GO_Central"/>
</dbReference>
<dbReference type="GO" id="GO:0003978">
    <property type="term" value="F:UDP-glucose 4-epimerase activity"/>
    <property type="evidence" value="ECO:0000318"/>
    <property type="project" value="GO_Central"/>
</dbReference>
<dbReference type="GO" id="GO:0006012">
    <property type="term" value="P:galactose metabolic process"/>
    <property type="evidence" value="ECO:0007669"/>
    <property type="project" value="UniProtKB-UniPathway"/>
</dbReference>
<dbReference type="GO" id="GO:0005996">
    <property type="term" value="P:monosaccharide metabolic process"/>
    <property type="evidence" value="ECO:0000318"/>
    <property type="project" value="GO_Central"/>
</dbReference>
<dbReference type="CDD" id="cd05247">
    <property type="entry name" value="UDP_G4E_1_SDR_e"/>
    <property type="match status" value="1"/>
</dbReference>
<dbReference type="Gene3D" id="3.40.50.720">
    <property type="entry name" value="NAD(P)-binding Rossmann-like Domain"/>
    <property type="match status" value="1"/>
</dbReference>
<dbReference type="Gene3D" id="3.90.25.10">
    <property type="entry name" value="UDP-galactose 4-epimerase, domain 1"/>
    <property type="match status" value="1"/>
</dbReference>
<dbReference type="InterPro" id="IPR016040">
    <property type="entry name" value="NAD(P)-bd_dom"/>
</dbReference>
<dbReference type="InterPro" id="IPR036291">
    <property type="entry name" value="NAD(P)-bd_dom_sf"/>
</dbReference>
<dbReference type="InterPro" id="IPR005886">
    <property type="entry name" value="UDP_G4E"/>
</dbReference>
<dbReference type="NCBIfam" id="TIGR01179">
    <property type="entry name" value="galE"/>
    <property type="match status" value="1"/>
</dbReference>
<dbReference type="NCBIfam" id="NF007956">
    <property type="entry name" value="PRK10675.1"/>
    <property type="match status" value="1"/>
</dbReference>
<dbReference type="PANTHER" id="PTHR43725:SF15">
    <property type="entry name" value="BIFUNCTIONAL UDP-GLUCOSE 4-EPIMERASE AND UDP-XYLOSE 4-EPIMERASE 1"/>
    <property type="match status" value="1"/>
</dbReference>
<dbReference type="PANTHER" id="PTHR43725">
    <property type="entry name" value="UDP-GLUCOSE 4-EPIMERASE"/>
    <property type="match status" value="1"/>
</dbReference>
<dbReference type="Pfam" id="PF16363">
    <property type="entry name" value="GDP_Man_Dehyd"/>
    <property type="match status" value="1"/>
</dbReference>
<dbReference type="SUPFAM" id="SSF51735">
    <property type="entry name" value="NAD(P)-binding Rossmann-fold domains"/>
    <property type="match status" value="1"/>
</dbReference>
<feature type="chain" id="PRO_0000422190" description="UDP-glucose 4-epimerase 3">
    <location>
        <begin position="1"/>
        <end position="373"/>
    </location>
</feature>
<feature type="active site" description="Proton acceptor" evidence="1">
    <location>
        <position position="177"/>
    </location>
</feature>
<feature type="binding site" evidence="1">
    <location>
        <begin position="27"/>
        <end position="58"/>
    </location>
    <ligand>
        <name>NAD(+)</name>
        <dbReference type="ChEBI" id="CHEBI:57540"/>
    </ligand>
</feature>
<feature type="binding site" evidence="1">
    <location>
        <position position="153"/>
    </location>
    <ligand>
        <name>substrate</name>
    </ligand>
</feature>
<feature type="sequence conflict" description="In Ref. 1; BAC41499." evidence="2" ref="1">
    <original>V</original>
    <variation>A</variation>
    <location>
        <position position="156"/>
    </location>
</feature>
<feature type="sequence conflict" description="In Ref. 1; BAC41499." evidence="2" ref="1">
    <original>N</original>
    <variation>D</variation>
    <location>
        <position position="207"/>
    </location>
</feature>
<reference key="1">
    <citation type="submission" date="2002-12" db="EMBL/GenBank/DDBJ databases">
        <title>Cloning of UDP-glucose 4-epimerase genes in Oryza sativa.</title>
        <authorList>
            <person name="Suzuki K."/>
            <person name="Kitamura S."/>
        </authorList>
    </citation>
    <scope>NUCLEOTIDE SEQUENCE [MRNA]</scope>
    <source>
        <strain>cv. Nipponbare</strain>
        <tissue>Immature seed</tissue>
    </source>
</reference>
<reference key="2">
    <citation type="journal article" date="2005" name="Nature">
        <title>The map-based sequence of the rice genome.</title>
        <authorList>
            <consortium name="International rice genome sequencing project (IRGSP)"/>
        </authorList>
    </citation>
    <scope>NUCLEOTIDE SEQUENCE [LARGE SCALE GENOMIC DNA]</scope>
    <source>
        <strain>cv. Nipponbare</strain>
    </source>
</reference>
<reference key="3">
    <citation type="journal article" date="2008" name="Nucleic Acids Res.">
        <title>The rice annotation project database (RAP-DB): 2008 update.</title>
        <authorList>
            <consortium name="The rice annotation project (RAP)"/>
        </authorList>
    </citation>
    <scope>GENOME REANNOTATION</scope>
    <source>
        <strain>cv. Nipponbare</strain>
    </source>
</reference>
<reference key="4">
    <citation type="journal article" date="2013" name="Rice">
        <title>Improvement of the Oryza sativa Nipponbare reference genome using next generation sequence and optical map data.</title>
        <authorList>
            <person name="Kawahara Y."/>
            <person name="de la Bastide M."/>
            <person name="Hamilton J.P."/>
            <person name="Kanamori H."/>
            <person name="McCombie W.R."/>
            <person name="Ouyang S."/>
            <person name="Schwartz D.C."/>
            <person name="Tanaka T."/>
            <person name="Wu J."/>
            <person name="Zhou S."/>
            <person name="Childs K.L."/>
            <person name="Davidson R.M."/>
            <person name="Lin H."/>
            <person name="Quesada-Ocampo L."/>
            <person name="Vaillancourt B."/>
            <person name="Sakai H."/>
            <person name="Lee S.S."/>
            <person name="Kim J."/>
            <person name="Numa H."/>
            <person name="Itoh T."/>
            <person name="Buell C.R."/>
            <person name="Matsumoto T."/>
        </authorList>
    </citation>
    <scope>GENOME REANNOTATION</scope>
    <source>
        <strain>cv. Nipponbare</strain>
    </source>
</reference>
<reference key="5">
    <citation type="journal article" date="2005" name="PLoS Biol.">
        <title>The genomes of Oryza sativa: a history of duplications.</title>
        <authorList>
            <person name="Yu J."/>
            <person name="Wang J."/>
            <person name="Lin W."/>
            <person name="Li S."/>
            <person name="Li H."/>
            <person name="Zhou J."/>
            <person name="Ni P."/>
            <person name="Dong W."/>
            <person name="Hu S."/>
            <person name="Zeng C."/>
            <person name="Zhang J."/>
            <person name="Zhang Y."/>
            <person name="Li R."/>
            <person name="Xu Z."/>
            <person name="Li S."/>
            <person name="Li X."/>
            <person name="Zheng H."/>
            <person name="Cong L."/>
            <person name="Lin L."/>
            <person name="Yin J."/>
            <person name="Geng J."/>
            <person name="Li G."/>
            <person name="Shi J."/>
            <person name="Liu J."/>
            <person name="Lv H."/>
            <person name="Li J."/>
            <person name="Wang J."/>
            <person name="Deng Y."/>
            <person name="Ran L."/>
            <person name="Shi X."/>
            <person name="Wang X."/>
            <person name="Wu Q."/>
            <person name="Li C."/>
            <person name="Ren X."/>
            <person name="Wang J."/>
            <person name="Wang X."/>
            <person name="Li D."/>
            <person name="Liu D."/>
            <person name="Zhang X."/>
            <person name="Ji Z."/>
            <person name="Zhao W."/>
            <person name="Sun Y."/>
            <person name="Zhang Z."/>
            <person name="Bao J."/>
            <person name="Han Y."/>
            <person name="Dong L."/>
            <person name="Ji J."/>
            <person name="Chen P."/>
            <person name="Wu S."/>
            <person name="Liu J."/>
            <person name="Xiao Y."/>
            <person name="Bu D."/>
            <person name="Tan J."/>
            <person name="Yang L."/>
            <person name="Ye C."/>
            <person name="Zhang J."/>
            <person name="Xu J."/>
            <person name="Zhou Y."/>
            <person name="Yu Y."/>
            <person name="Zhang B."/>
            <person name="Zhuang S."/>
            <person name="Wei H."/>
            <person name="Liu B."/>
            <person name="Lei M."/>
            <person name="Yu H."/>
            <person name="Li Y."/>
            <person name="Xu H."/>
            <person name="Wei S."/>
            <person name="He X."/>
            <person name="Fang L."/>
            <person name="Zhang Z."/>
            <person name="Zhang Y."/>
            <person name="Huang X."/>
            <person name="Su Z."/>
            <person name="Tong W."/>
            <person name="Li J."/>
            <person name="Tong Z."/>
            <person name="Li S."/>
            <person name="Ye J."/>
            <person name="Wang L."/>
            <person name="Fang L."/>
            <person name="Lei T."/>
            <person name="Chen C.-S."/>
            <person name="Chen H.-C."/>
            <person name="Xu Z."/>
            <person name="Li H."/>
            <person name="Huang H."/>
            <person name="Zhang F."/>
            <person name="Xu H."/>
            <person name="Li N."/>
            <person name="Zhao C."/>
            <person name="Li S."/>
            <person name="Dong L."/>
            <person name="Huang Y."/>
            <person name="Li L."/>
            <person name="Xi Y."/>
            <person name="Qi Q."/>
            <person name="Li W."/>
            <person name="Zhang B."/>
            <person name="Hu W."/>
            <person name="Zhang Y."/>
            <person name="Tian X."/>
            <person name="Jiao Y."/>
            <person name="Liang X."/>
            <person name="Jin J."/>
            <person name="Gao L."/>
            <person name="Zheng W."/>
            <person name="Hao B."/>
            <person name="Liu S.-M."/>
            <person name="Wang W."/>
            <person name="Yuan L."/>
            <person name="Cao M."/>
            <person name="McDermott J."/>
            <person name="Samudrala R."/>
            <person name="Wang J."/>
            <person name="Wong G.K.-S."/>
            <person name="Yang H."/>
        </authorList>
    </citation>
    <scope>NUCLEOTIDE SEQUENCE [LARGE SCALE GENOMIC DNA]</scope>
    <source>
        <strain>cv. Nipponbare</strain>
    </source>
</reference>
<reference key="6">
    <citation type="journal article" date="2003" name="Science">
        <title>Collection, mapping, and annotation of over 28,000 cDNA clones from japonica rice.</title>
        <authorList>
            <consortium name="The rice full-length cDNA consortium"/>
        </authorList>
    </citation>
    <scope>NUCLEOTIDE SEQUENCE [LARGE SCALE MRNA]</scope>
    <source>
        <strain>cv. Nipponbare</strain>
    </source>
</reference>
<reference key="7">
    <citation type="journal article" date="2006" name="Biochem. J.">
        <title>Gene expression patterns and catalytic properties of UDP-D-glucose 4-epimerases from barley (Hordeum vulgare L.).</title>
        <authorList>
            <person name="Zhang Q."/>
            <person name="Hrmova M."/>
            <person name="Shirley N.J."/>
            <person name="Lahnstein J."/>
            <person name="Fincher G.B."/>
        </authorList>
    </citation>
    <scope>GENE FAMILY</scope>
</reference>
<name>UGE3_ORYSJ</name>
<proteinExistence type="evidence at transcript level"/>
<organism>
    <name type="scientific">Oryza sativa subsp. japonica</name>
    <name type="common">Rice</name>
    <dbReference type="NCBI Taxonomy" id="39947"/>
    <lineage>
        <taxon>Eukaryota</taxon>
        <taxon>Viridiplantae</taxon>
        <taxon>Streptophyta</taxon>
        <taxon>Embryophyta</taxon>
        <taxon>Tracheophyta</taxon>
        <taxon>Spermatophyta</taxon>
        <taxon>Magnoliopsida</taxon>
        <taxon>Liliopsida</taxon>
        <taxon>Poales</taxon>
        <taxon>Poaceae</taxon>
        <taxon>BOP clade</taxon>
        <taxon>Oryzoideae</taxon>
        <taxon>Oryzeae</taxon>
        <taxon>Oryzinae</taxon>
        <taxon>Oryza</taxon>
        <taxon>Oryza sativa</taxon>
    </lineage>
</organism>
<evidence type="ECO:0000250" key="1"/>
<evidence type="ECO:0000305" key="2"/>
<gene>
    <name type="primary">UGE-3</name>
    <name type="ordered locus">Os09g0526700</name>
    <name type="ordered locus">LOC_Os09g35800</name>
    <name type="ORF">OJ1439_F07.18</name>
    <name type="ORF">OsJ_30076</name>
</gene>